<feature type="chain" id="PRO_0000257833" description="PWWP domain-containing DNA repair factor 3B">
    <location>
        <begin position="1"/>
        <end position="681"/>
    </location>
</feature>
<feature type="domain" description="PWWP">
    <location>
        <begin position="377"/>
        <end position="438"/>
    </location>
</feature>
<feature type="region of interest" description="Disordered" evidence="1">
    <location>
        <begin position="102"/>
        <end position="144"/>
    </location>
</feature>
<feature type="region of interest" description="Disordered" evidence="1">
    <location>
        <begin position="166"/>
        <end position="200"/>
    </location>
</feature>
<feature type="region of interest" description="Disordered" evidence="1">
    <location>
        <begin position="285"/>
        <end position="304"/>
    </location>
</feature>
<feature type="compositionally biased region" description="Polar residues" evidence="1">
    <location>
        <begin position="102"/>
        <end position="121"/>
    </location>
</feature>
<feature type="compositionally biased region" description="Polar residues" evidence="1">
    <location>
        <begin position="285"/>
        <end position="302"/>
    </location>
</feature>
<feature type="modified residue" description="Phosphoserine" evidence="4">
    <location>
        <position position="128"/>
    </location>
</feature>
<feature type="sequence conflict" description="In Ref. 2; AAH96534." evidence="2" ref="2">
    <original>A</original>
    <variation>S</variation>
    <location>
        <position position="85"/>
    </location>
</feature>
<sequence length="681" mass="76989">MDGKYVLCNWKDQLWPAKVLDRSESPSESKRKNTSSLEVEILSLDEKITVESTDTKVLSKSAVEAIMSSLAVQSEVIIAPREETAYERSLKMALEMVKEGTNLSQESMSEEQPTATASENVPEQPPDSPPHKKFRKLESNTQEDSASILLCSESDDSMTDDKLQVHTTGESMPSEMDTKATENLGCCQTDPSLADEDDKKEEKKKIDISAIMSVNLSLKEESEYIKEEKFVPSSEDLTVPKEESQDILPEAPLAVSSECSIVSENNMEDPGEGPSNQNLVSYANQNQSSVESDVGAETSTAGCSGDFQVSLPTRDTVSSDLLLQRLDLEDLEEEARASGKLLSLNPASAAALENDNEDDDEDLPRFILHYETRAFETGMIVWFKYQKYPFWPAVIKSIRRKERKASVLLVEADMSPQKKGVRVSLRRLKKYDCKEKQALVEKAREEYRESIDWCVSLICDYRVRLGCGSFTGSFFEYYAADISYPVRKIIKQDTFRNIFPKLYNENVGEQLPMASQAKRVSFQKILPDRMKPARDRANKNLVDFIVNAKGTEDHLLGILKGTKKSKWLKSFLNAKSFTPCIETYFEDEDQLDEVVKYLQEIYKQIDQKMLTLIKDDKIKFVLEVLLPEAIICSISAVDGLDYEAAEAKYLKGPSLGCRERELYDSKILFEKRRRSLPNEGH</sequence>
<comment type="similarity">
    <text evidence="2">Belongs to the PWWP3A family.</text>
</comment>
<comment type="sequence caution" evidence="2">
    <conflict type="erroneous initiation">
        <sequence resource="EMBL-CDS" id="BAC28940"/>
    </conflict>
    <text>Truncated N-terminus.</text>
</comment>
<evidence type="ECO:0000256" key="1">
    <source>
        <dbReference type="SAM" id="MobiDB-lite"/>
    </source>
</evidence>
<evidence type="ECO:0000305" key="2"/>
<evidence type="ECO:0000312" key="3">
    <source>
        <dbReference type="MGI" id="MGI:2445062"/>
    </source>
</evidence>
<evidence type="ECO:0007744" key="4">
    <source>
    </source>
</evidence>
<keyword id="KW-0597">Phosphoprotein</keyword>
<keyword id="KW-1185">Reference proteome</keyword>
<name>PWP3B_MOUSE</name>
<dbReference type="EMBL" id="AL732419">
    <property type="status" value="NOT_ANNOTATED_CDS"/>
    <property type="molecule type" value="Genomic_DNA"/>
</dbReference>
<dbReference type="EMBL" id="BC053077">
    <property type="protein sequence ID" value="AAH53077.1"/>
    <property type="molecule type" value="mRNA"/>
</dbReference>
<dbReference type="EMBL" id="BC068178">
    <property type="status" value="NOT_ANNOTATED_CDS"/>
    <property type="molecule type" value="mRNA"/>
</dbReference>
<dbReference type="EMBL" id="BC096534">
    <property type="protein sequence ID" value="AAH96534.1"/>
    <property type="molecule type" value="mRNA"/>
</dbReference>
<dbReference type="EMBL" id="BC120584">
    <property type="protein sequence ID" value="AAI20585.1"/>
    <property type="molecule type" value="mRNA"/>
</dbReference>
<dbReference type="EMBL" id="AK035086">
    <property type="protein sequence ID" value="BAC28940.1"/>
    <property type="status" value="ALT_INIT"/>
    <property type="molecule type" value="mRNA"/>
</dbReference>
<dbReference type="CCDS" id="CCDS30432.2"/>
<dbReference type="RefSeq" id="NP_001158102.1">
    <property type="nucleotide sequence ID" value="NM_001164630.1"/>
</dbReference>
<dbReference type="RefSeq" id="NP_001158103.1">
    <property type="nucleotide sequence ID" value="NM_001164631.1"/>
</dbReference>
<dbReference type="RefSeq" id="NP_001158104.1">
    <property type="nucleotide sequence ID" value="NM_001164632.1"/>
</dbReference>
<dbReference type="RefSeq" id="NP_001158105.1">
    <property type="nucleotide sequence ID" value="NM_001164633.1"/>
</dbReference>
<dbReference type="RefSeq" id="NP_780750.2">
    <property type="nucleotide sequence ID" value="NM_175541.3"/>
</dbReference>
<dbReference type="RefSeq" id="XP_006528604.1">
    <property type="nucleotide sequence ID" value="XM_006528541.1"/>
</dbReference>
<dbReference type="RefSeq" id="XP_006528606.1">
    <property type="nucleotide sequence ID" value="XM_006528543.1"/>
</dbReference>
<dbReference type="RefSeq" id="XP_006528607.1">
    <property type="nucleotide sequence ID" value="XM_006528544.2"/>
</dbReference>
<dbReference type="RefSeq" id="XP_017173988.1">
    <property type="nucleotide sequence ID" value="XM_017318499.2"/>
</dbReference>
<dbReference type="RefSeq" id="XP_030107205.1">
    <property type="nucleotide sequence ID" value="XM_030251345.1"/>
</dbReference>
<dbReference type="SMR" id="Q4VA55"/>
<dbReference type="BioGRID" id="232815">
    <property type="interactions" value="1"/>
</dbReference>
<dbReference type="FunCoup" id="Q4VA55">
    <property type="interactions" value="15"/>
</dbReference>
<dbReference type="STRING" id="10090.ENSMUSP00000108666"/>
<dbReference type="iPTMnet" id="Q4VA55"/>
<dbReference type="PhosphoSitePlus" id="Q4VA55"/>
<dbReference type="SwissPalm" id="Q4VA55"/>
<dbReference type="PaxDb" id="10090-ENSMUSP00000108666"/>
<dbReference type="ProteomicsDB" id="291460"/>
<dbReference type="Antibodypedia" id="427">
    <property type="antibodies" value="81 antibodies from 19 providers"/>
</dbReference>
<dbReference type="Ensembl" id="ENSMUST00000113041.9">
    <property type="protein sequence ID" value="ENSMUSP00000108664.3"/>
    <property type="gene ID" value="ENSMUSG00000042515.14"/>
</dbReference>
<dbReference type="Ensembl" id="ENSMUST00000113042.3">
    <property type="protein sequence ID" value="ENSMUSP00000108665.3"/>
    <property type="gene ID" value="ENSMUSG00000042515.14"/>
</dbReference>
<dbReference type="Ensembl" id="ENSMUST00000113043.8">
    <property type="protein sequence ID" value="ENSMUSP00000108666.2"/>
    <property type="gene ID" value="ENSMUSG00000042515.14"/>
</dbReference>
<dbReference type="Ensembl" id="ENSMUST00000113045.9">
    <property type="protein sequence ID" value="ENSMUSP00000108668.3"/>
    <property type="gene ID" value="ENSMUSG00000042515.14"/>
</dbReference>
<dbReference type="GeneID" id="245631"/>
<dbReference type="KEGG" id="mmu:245631"/>
<dbReference type="UCSC" id="uc009ukc.2">
    <property type="organism name" value="mouse"/>
</dbReference>
<dbReference type="AGR" id="MGI:2445062"/>
<dbReference type="CTD" id="139221"/>
<dbReference type="MGI" id="MGI:2445062">
    <property type="gene designation" value="Pwwp3b"/>
</dbReference>
<dbReference type="VEuPathDB" id="HostDB:ENSMUSG00000042515"/>
<dbReference type="eggNOG" id="ENOG502QPRU">
    <property type="taxonomic scope" value="Eukaryota"/>
</dbReference>
<dbReference type="GeneTree" id="ENSGT00390000001700"/>
<dbReference type="HOGENOM" id="CLU_388271_0_0_1"/>
<dbReference type="InParanoid" id="Q4VA55"/>
<dbReference type="OMA" id="KYRKHEG"/>
<dbReference type="OrthoDB" id="10013064at2759"/>
<dbReference type="PhylomeDB" id="Q4VA55"/>
<dbReference type="TreeFam" id="TF328774"/>
<dbReference type="BioGRID-ORCS" id="245631">
    <property type="hits" value="2 hits in 79 CRISPR screens"/>
</dbReference>
<dbReference type="ChiTaRS" id="Pwwp3b">
    <property type="organism name" value="mouse"/>
</dbReference>
<dbReference type="PRO" id="PR:Q4VA55"/>
<dbReference type="Proteomes" id="UP000000589">
    <property type="component" value="Chromosome X"/>
</dbReference>
<dbReference type="RNAct" id="Q4VA55">
    <property type="molecule type" value="protein"/>
</dbReference>
<dbReference type="Bgee" id="ENSMUSG00000042515">
    <property type="expression patterns" value="Expressed in 1st arch mandibular component and 184 other cell types or tissues"/>
</dbReference>
<dbReference type="ExpressionAtlas" id="Q4VA55">
    <property type="expression patterns" value="baseline and differential"/>
</dbReference>
<dbReference type="CDD" id="cd06080">
    <property type="entry name" value="PWWP_MUM1-like"/>
    <property type="match status" value="1"/>
</dbReference>
<dbReference type="FunFam" id="2.30.30.140:FF:000063">
    <property type="entry name" value="PWWP domain-containing DNA repair factor 3A"/>
    <property type="match status" value="1"/>
</dbReference>
<dbReference type="Gene3D" id="2.30.30.140">
    <property type="match status" value="1"/>
</dbReference>
<dbReference type="Gene3D" id="6.10.300.20">
    <property type="match status" value="1"/>
</dbReference>
<dbReference type="InterPro" id="IPR035504">
    <property type="entry name" value="MUM1-like_PWWP"/>
</dbReference>
<dbReference type="InterPro" id="IPR040263">
    <property type="entry name" value="PWP3A_3B_4"/>
</dbReference>
<dbReference type="InterPro" id="IPR048795">
    <property type="entry name" value="PWP3A_3B_4_C"/>
</dbReference>
<dbReference type="InterPro" id="IPR048765">
    <property type="entry name" value="PWP3A_3B_4_N"/>
</dbReference>
<dbReference type="PANTHER" id="PTHR31333">
    <property type="entry name" value="PWWP DOMAIN-CONTAINING DNA REPAIR FACTOR 3 FAMILY MEMBER"/>
    <property type="match status" value="1"/>
</dbReference>
<dbReference type="PANTHER" id="PTHR31333:SF3">
    <property type="entry name" value="PWWP DOMAIN-CONTAINING DNA REPAIR FACTOR 3B"/>
    <property type="match status" value="1"/>
</dbReference>
<dbReference type="Pfam" id="PF20884">
    <property type="entry name" value="MUM1-like_PWWP"/>
    <property type="match status" value="1"/>
</dbReference>
<dbReference type="Pfam" id="PF20886">
    <property type="entry name" value="PWP3A-B_C"/>
    <property type="match status" value="1"/>
</dbReference>
<dbReference type="Pfam" id="PF20887">
    <property type="entry name" value="PWP3A-B_N"/>
    <property type="match status" value="1"/>
</dbReference>
<dbReference type="SUPFAM" id="SSF63748">
    <property type="entry name" value="Tudor/PWWP/MBT"/>
    <property type="match status" value="1"/>
</dbReference>
<reference key="1">
    <citation type="journal article" date="2009" name="PLoS Biol.">
        <title>Lineage-specific biology revealed by a finished genome assembly of the mouse.</title>
        <authorList>
            <person name="Church D.M."/>
            <person name="Goodstadt L."/>
            <person name="Hillier L.W."/>
            <person name="Zody M.C."/>
            <person name="Goldstein S."/>
            <person name="She X."/>
            <person name="Bult C.J."/>
            <person name="Agarwala R."/>
            <person name="Cherry J.L."/>
            <person name="DiCuccio M."/>
            <person name="Hlavina W."/>
            <person name="Kapustin Y."/>
            <person name="Meric P."/>
            <person name="Maglott D."/>
            <person name="Birtle Z."/>
            <person name="Marques A.C."/>
            <person name="Graves T."/>
            <person name="Zhou S."/>
            <person name="Teague B."/>
            <person name="Potamousis K."/>
            <person name="Churas C."/>
            <person name="Place M."/>
            <person name="Herschleb J."/>
            <person name="Runnheim R."/>
            <person name="Forrest D."/>
            <person name="Amos-Landgraf J."/>
            <person name="Schwartz D.C."/>
            <person name="Cheng Z."/>
            <person name="Lindblad-Toh K."/>
            <person name="Eichler E.E."/>
            <person name="Ponting C.P."/>
        </authorList>
    </citation>
    <scope>NUCLEOTIDE SEQUENCE [LARGE SCALE GENOMIC DNA]</scope>
    <source>
        <strain>C57BL/6J</strain>
    </source>
</reference>
<reference key="2">
    <citation type="journal article" date="2004" name="Genome Res.">
        <title>The status, quality, and expansion of the NIH full-length cDNA project: the Mammalian Gene Collection (MGC).</title>
        <authorList>
            <consortium name="The MGC Project Team"/>
        </authorList>
    </citation>
    <scope>NUCLEOTIDE SEQUENCE [LARGE SCALE MRNA]</scope>
    <source>
        <strain>C57BL/6J</strain>
        <tissue>Brain</tissue>
        <tissue>Eye</tissue>
    </source>
</reference>
<reference key="3">
    <citation type="journal article" date="2005" name="Science">
        <title>The transcriptional landscape of the mammalian genome.</title>
        <authorList>
            <person name="Carninci P."/>
            <person name="Kasukawa T."/>
            <person name="Katayama S."/>
            <person name="Gough J."/>
            <person name="Frith M.C."/>
            <person name="Maeda N."/>
            <person name="Oyama R."/>
            <person name="Ravasi T."/>
            <person name="Lenhard B."/>
            <person name="Wells C."/>
            <person name="Kodzius R."/>
            <person name="Shimokawa K."/>
            <person name="Bajic V.B."/>
            <person name="Brenner S.E."/>
            <person name="Batalov S."/>
            <person name="Forrest A.R."/>
            <person name="Zavolan M."/>
            <person name="Davis M.J."/>
            <person name="Wilming L.G."/>
            <person name="Aidinis V."/>
            <person name="Allen J.E."/>
            <person name="Ambesi-Impiombato A."/>
            <person name="Apweiler R."/>
            <person name="Aturaliya R.N."/>
            <person name="Bailey T.L."/>
            <person name="Bansal M."/>
            <person name="Baxter L."/>
            <person name="Beisel K.W."/>
            <person name="Bersano T."/>
            <person name="Bono H."/>
            <person name="Chalk A.M."/>
            <person name="Chiu K.P."/>
            <person name="Choudhary V."/>
            <person name="Christoffels A."/>
            <person name="Clutterbuck D.R."/>
            <person name="Crowe M.L."/>
            <person name="Dalla E."/>
            <person name="Dalrymple B.P."/>
            <person name="de Bono B."/>
            <person name="Della Gatta G."/>
            <person name="di Bernardo D."/>
            <person name="Down T."/>
            <person name="Engstrom P."/>
            <person name="Fagiolini M."/>
            <person name="Faulkner G."/>
            <person name="Fletcher C.F."/>
            <person name="Fukushima T."/>
            <person name="Furuno M."/>
            <person name="Futaki S."/>
            <person name="Gariboldi M."/>
            <person name="Georgii-Hemming P."/>
            <person name="Gingeras T.R."/>
            <person name="Gojobori T."/>
            <person name="Green R.E."/>
            <person name="Gustincich S."/>
            <person name="Harbers M."/>
            <person name="Hayashi Y."/>
            <person name="Hensch T.K."/>
            <person name="Hirokawa N."/>
            <person name="Hill D."/>
            <person name="Huminiecki L."/>
            <person name="Iacono M."/>
            <person name="Ikeo K."/>
            <person name="Iwama A."/>
            <person name="Ishikawa T."/>
            <person name="Jakt M."/>
            <person name="Kanapin A."/>
            <person name="Katoh M."/>
            <person name="Kawasawa Y."/>
            <person name="Kelso J."/>
            <person name="Kitamura H."/>
            <person name="Kitano H."/>
            <person name="Kollias G."/>
            <person name="Krishnan S.P."/>
            <person name="Kruger A."/>
            <person name="Kummerfeld S.K."/>
            <person name="Kurochkin I.V."/>
            <person name="Lareau L.F."/>
            <person name="Lazarevic D."/>
            <person name="Lipovich L."/>
            <person name="Liu J."/>
            <person name="Liuni S."/>
            <person name="McWilliam S."/>
            <person name="Madan Babu M."/>
            <person name="Madera M."/>
            <person name="Marchionni L."/>
            <person name="Matsuda H."/>
            <person name="Matsuzawa S."/>
            <person name="Miki H."/>
            <person name="Mignone F."/>
            <person name="Miyake S."/>
            <person name="Morris K."/>
            <person name="Mottagui-Tabar S."/>
            <person name="Mulder N."/>
            <person name="Nakano N."/>
            <person name="Nakauchi H."/>
            <person name="Ng P."/>
            <person name="Nilsson R."/>
            <person name="Nishiguchi S."/>
            <person name="Nishikawa S."/>
            <person name="Nori F."/>
            <person name="Ohara O."/>
            <person name="Okazaki Y."/>
            <person name="Orlando V."/>
            <person name="Pang K.C."/>
            <person name="Pavan W.J."/>
            <person name="Pavesi G."/>
            <person name="Pesole G."/>
            <person name="Petrovsky N."/>
            <person name="Piazza S."/>
            <person name="Reed J."/>
            <person name="Reid J.F."/>
            <person name="Ring B.Z."/>
            <person name="Ringwald M."/>
            <person name="Rost B."/>
            <person name="Ruan Y."/>
            <person name="Salzberg S.L."/>
            <person name="Sandelin A."/>
            <person name="Schneider C."/>
            <person name="Schoenbach C."/>
            <person name="Sekiguchi K."/>
            <person name="Semple C.A."/>
            <person name="Seno S."/>
            <person name="Sessa L."/>
            <person name="Sheng Y."/>
            <person name="Shibata Y."/>
            <person name="Shimada H."/>
            <person name="Shimada K."/>
            <person name="Silva D."/>
            <person name="Sinclair B."/>
            <person name="Sperling S."/>
            <person name="Stupka E."/>
            <person name="Sugiura K."/>
            <person name="Sultana R."/>
            <person name="Takenaka Y."/>
            <person name="Taki K."/>
            <person name="Tammoja K."/>
            <person name="Tan S.L."/>
            <person name="Tang S."/>
            <person name="Taylor M.S."/>
            <person name="Tegner J."/>
            <person name="Teichmann S.A."/>
            <person name="Ueda H.R."/>
            <person name="van Nimwegen E."/>
            <person name="Verardo R."/>
            <person name="Wei C.L."/>
            <person name="Yagi K."/>
            <person name="Yamanishi H."/>
            <person name="Zabarovsky E."/>
            <person name="Zhu S."/>
            <person name="Zimmer A."/>
            <person name="Hide W."/>
            <person name="Bult C."/>
            <person name="Grimmond S.M."/>
            <person name="Teasdale R.D."/>
            <person name="Liu E.T."/>
            <person name="Brusic V."/>
            <person name="Quackenbush J."/>
            <person name="Wahlestedt C."/>
            <person name="Mattick J.S."/>
            <person name="Hume D.A."/>
            <person name="Kai C."/>
            <person name="Sasaki D."/>
            <person name="Tomaru Y."/>
            <person name="Fukuda S."/>
            <person name="Kanamori-Katayama M."/>
            <person name="Suzuki M."/>
            <person name="Aoki J."/>
            <person name="Arakawa T."/>
            <person name="Iida J."/>
            <person name="Imamura K."/>
            <person name="Itoh M."/>
            <person name="Kato T."/>
            <person name="Kawaji H."/>
            <person name="Kawagashira N."/>
            <person name="Kawashima T."/>
            <person name="Kojima M."/>
            <person name="Kondo S."/>
            <person name="Konno H."/>
            <person name="Nakano K."/>
            <person name="Ninomiya N."/>
            <person name="Nishio T."/>
            <person name="Okada M."/>
            <person name="Plessy C."/>
            <person name="Shibata K."/>
            <person name="Shiraki T."/>
            <person name="Suzuki S."/>
            <person name="Tagami M."/>
            <person name="Waki K."/>
            <person name="Watahiki A."/>
            <person name="Okamura-Oho Y."/>
            <person name="Suzuki H."/>
            <person name="Kawai J."/>
            <person name="Hayashizaki Y."/>
        </authorList>
    </citation>
    <scope>NUCLEOTIDE SEQUENCE [LARGE SCALE MRNA] OF 91-681</scope>
    <source>
        <strain>C57BL/6J</strain>
        <tissue>Embryonic breast</tissue>
    </source>
</reference>
<reference key="4">
    <citation type="journal article" date="2010" name="Cell">
        <title>A tissue-specific atlas of mouse protein phosphorylation and expression.</title>
        <authorList>
            <person name="Huttlin E.L."/>
            <person name="Jedrychowski M.P."/>
            <person name="Elias J.E."/>
            <person name="Goswami T."/>
            <person name="Rad R."/>
            <person name="Beausoleil S.A."/>
            <person name="Villen J."/>
            <person name="Haas W."/>
            <person name="Sowa M.E."/>
            <person name="Gygi S.P."/>
        </authorList>
    </citation>
    <scope>PHOSPHORYLATION [LARGE SCALE ANALYSIS] AT SER-128</scope>
    <scope>IDENTIFICATION BY MASS SPECTROMETRY [LARGE SCALE ANALYSIS]</scope>
    <source>
        <tissue>Testis</tissue>
    </source>
</reference>
<organism>
    <name type="scientific">Mus musculus</name>
    <name type="common">Mouse</name>
    <dbReference type="NCBI Taxonomy" id="10090"/>
    <lineage>
        <taxon>Eukaryota</taxon>
        <taxon>Metazoa</taxon>
        <taxon>Chordata</taxon>
        <taxon>Craniata</taxon>
        <taxon>Vertebrata</taxon>
        <taxon>Euteleostomi</taxon>
        <taxon>Mammalia</taxon>
        <taxon>Eutheria</taxon>
        <taxon>Euarchontoglires</taxon>
        <taxon>Glires</taxon>
        <taxon>Rodentia</taxon>
        <taxon>Myomorpha</taxon>
        <taxon>Muroidea</taxon>
        <taxon>Muridae</taxon>
        <taxon>Murinae</taxon>
        <taxon>Mus</taxon>
        <taxon>Mus</taxon>
    </lineage>
</organism>
<proteinExistence type="evidence at protein level"/>
<protein>
    <recommendedName>
        <fullName evidence="2">PWWP domain-containing DNA repair factor 3B</fullName>
        <shortName evidence="2">PWWP3B</shortName>
    </recommendedName>
    <alternativeName>
        <fullName>Mutated melanoma-associated antigen 1-like protein 1</fullName>
        <shortName>MUM1-like protein 1</shortName>
    </alternativeName>
    <alternativeName>
        <fullName>PWWP domain-containing protein MUM1L1</fullName>
    </alternativeName>
</protein>
<gene>
    <name type="primary">Pwwp3b</name>
    <name evidence="3" type="synonym">Mum1l1</name>
</gene>
<accession>Q4VA55</accession>
<accession>B1AW67</accession>
<accession>Q0VBL8</accession>
<accession>Q7TSI2</accession>
<accession>Q8BS63</accession>